<organism>
    <name type="scientific">Plasmopara viticola</name>
    <name type="common">Downy mildew of grapevine</name>
    <name type="synonym">Botrytis viticola</name>
    <dbReference type="NCBI Taxonomy" id="143451"/>
    <lineage>
        <taxon>Eukaryota</taxon>
        <taxon>Sar</taxon>
        <taxon>Stramenopiles</taxon>
        <taxon>Oomycota</taxon>
        <taxon>Peronosporales</taxon>
        <taxon>Peronosporaceae</taxon>
        <taxon>Plasmopara</taxon>
    </lineage>
</organism>
<feature type="signal peptide" evidence="1">
    <location>
        <begin position="1"/>
        <end position="18"/>
    </location>
</feature>
<feature type="chain" id="PRO_0000447910" description="Secreted RxLR effector protein 24">
    <location>
        <begin position="19"/>
        <end position="510"/>
    </location>
</feature>
<feature type="short sequence motif" description="RxLR-dEER" evidence="5">
    <location>
        <begin position="47"/>
        <end position="68"/>
    </location>
</feature>
<evidence type="ECO:0000255" key="1"/>
<evidence type="ECO:0000269" key="2">
    <source>
    </source>
</evidence>
<evidence type="ECO:0000303" key="3">
    <source>
    </source>
</evidence>
<evidence type="ECO:0000305" key="4"/>
<evidence type="ECO:0000305" key="5">
    <source>
    </source>
</evidence>
<protein>
    <recommendedName>
        <fullName evidence="3">Secreted RxLR effector protein 24</fullName>
    </recommendedName>
</protein>
<accession>P0CV01</accession>
<dbReference type="SMR" id="P0CV01"/>
<dbReference type="GO" id="GO:0005576">
    <property type="term" value="C:extracellular region"/>
    <property type="evidence" value="ECO:0007669"/>
    <property type="project" value="UniProtKB-SubCell"/>
</dbReference>
<dbReference type="GO" id="GO:0042025">
    <property type="term" value="C:host cell nucleus"/>
    <property type="evidence" value="ECO:0007669"/>
    <property type="project" value="UniProtKB-SubCell"/>
</dbReference>
<gene>
    <name evidence="3" type="primary">RXLR24</name>
</gene>
<proteinExistence type="evidence at transcript level"/>
<keyword id="KW-1048">Host nucleus</keyword>
<keyword id="KW-0964">Secreted</keyword>
<keyword id="KW-0732">Signal</keyword>
<keyword id="KW-0843">Virulence</keyword>
<sequence length="510" mass="56723">MRGAFYVAIALLGSHTAAECNQDEPQGAPNNDFLTFGGTIEKMLPRRVLRERRDSKDKLTVHAGAEERVMDPPPEAVEQAIMKTAGVMRTDSDDVIARAAGAIRAHEEIEALFRRIDPTLYNVNGQALHALPKPTNYMVSVASDIPTVPAKRAKVKASADVINNAAWRVSKHDLRLAPPEPSPSSIASSGIRFDNQPIAEKAFKLDLNKHSDEVEIINSNSKRKRIDLTPSHVGEQAPHPLPELQKYKVSVAVSIPMVLATKLEGDGPTLIMRNAANIITTHDFRPAPFGSSTRTVASSNSQIHSQPIAQEASKFALNVDPNEVKSLFHENLPLVGHALHTRVGNDELVPLATVNSIKAGNTQGPYVHKPRMATDEEIHAAFLEAFNLPFHQYLYETSIMIKIVKRQYKTSPGNHRIVESFSSLVNNQELSKLKESLGPDLQNLLAGMLELQDDLKSLREAYYVKLLIMYELFYDFCYVRLDLFDALVPKVDRTVWILKLKNYETLPSHD</sequence>
<comment type="function">
    <text evidence="2">Secreted effector that acts as an elicitor that induces cell death in host plant cells.</text>
</comment>
<comment type="subcellular location">
    <subcellularLocation>
        <location evidence="2">Secreted</location>
    </subcellularLocation>
    <subcellularLocation>
        <location evidence="2">Host nucleus</location>
    </subcellularLocation>
    <text evidence="2">Localizes to speckle-like structures within the nucleus.</text>
</comment>
<comment type="domain">
    <text evidence="5">The RxLR-dEER motif acts to carry the protein into the host cell cytoplasm through binding to cell surface phosphatidylinositol-3-phosphate.</text>
</comment>
<comment type="similarity">
    <text evidence="4">Belongs to the RxLR effector family.</text>
</comment>
<reference key="1">
    <citation type="journal article" date="2018" name="Front. Plant Sci.">
        <title>In planta functional analysis and subcellular localization of the oomycete pathogen Plasmopara viticola candidate RXLR effector repertoire.</title>
        <authorList>
            <person name="Liu Y."/>
            <person name="Lan X."/>
            <person name="Song S."/>
            <person name="Yin L."/>
            <person name="Dry I.B."/>
            <person name="Qu J."/>
            <person name="Xiang J."/>
            <person name="Lu J."/>
        </authorList>
    </citation>
    <scope>NUCLEOTIDE SEQUENCE [MRNA]</scope>
    <scope>DOMAIN</scope>
    <scope>FUNCTION</scope>
    <scope>SUBCELLULAR LOCATION</scope>
</reference>
<name>RLR24_PLAVT</name>